<proteinExistence type="predicted"/>
<evidence type="ECO:0000256" key="1">
    <source>
        <dbReference type="SAM" id="MobiDB-lite"/>
    </source>
</evidence>
<protein>
    <recommendedName>
        <fullName>Uncharacterized gene 11 protein</fullName>
    </recommendedName>
</protein>
<name>VG11_EHV2</name>
<reference key="1">
    <citation type="journal article" date="1995" name="J. Mol. Biol.">
        <title>The DNA sequence of equine herpesvirus 2.</title>
        <authorList>
            <person name="Telford E.A.R."/>
            <person name="Watson M.S."/>
            <person name="Aird H.C."/>
            <person name="Perry J."/>
            <person name="Davison A.J."/>
        </authorList>
    </citation>
    <scope>NUCLEOTIDE SEQUENCE [LARGE SCALE GENOMIC DNA]</scope>
</reference>
<reference key="2">
    <citation type="submission" date="2015-01" db="EMBL/GenBank/DDBJ databases">
        <authorList>
            <person name="Davison A.J."/>
        </authorList>
    </citation>
    <scope>SEQUENCE REVISION</scope>
</reference>
<feature type="chain" id="PRO_0000406022" description="Uncharacterized gene 11 protein">
    <location>
        <begin position="1"/>
        <end position="472"/>
    </location>
</feature>
<feature type="region of interest" description="Disordered" evidence="1">
    <location>
        <begin position="1"/>
        <end position="74"/>
    </location>
</feature>
<feature type="compositionally biased region" description="Low complexity" evidence="1">
    <location>
        <begin position="1"/>
        <end position="21"/>
    </location>
</feature>
<feature type="compositionally biased region" description="Low complexity" evidence="1">
    <location>
        <begin position="63"/>
        <end position="74"/>
    </location>
</feature>
<keyword id="KW-1185">Reference proteome</keyword>
<organismHost>
    <name type="scientific">Equus caballus</name>
    <name type="common">Horse</name>
    <dbReference type="NCBI Taxonomy" id="9796"/>
</organismHost>
<gene>
    <name type="primary">11</name>
</gene>
<sequence length="472" mass="50654">MAFSSSSLRRSLKLGRGSRPGIPHVTDGTVTYGRRAGTMRDRGASLRPGAGGGGGDGERPKRASSLPAPASSSPGDPFWSFSVYATYVKVTNKIRFVPGMLADCTLPYLPNLKNILAGRYPNFHFTTTAHGGNLSEVAFLAVECPRNPVRAAPTVVRCSLNEIAISLMRPLEGPVPAGGLTFYLLPVTLVKPHGLYLKIQKDRAAVGAATTCSQDGAHLNSEQPQVFFSGTAAPAREGGELPFLLAQRTPRFERGGFCKVHVTQGVTCPVNAVKLSKHYVRLPVCELRGDGGAGAAAPSQIKVGVTLVREAMLAFRYNPYLFSPWCWAEATVPIHYYGPPVIVPAGQAARVVYGNVYYAPMLDELTAVIAPPLDGDGDRRFGLMGCCEWPKGGHAELAVENRTCFLQVLRTGDRLGYAIFFIAPRIPMVNLLPARYRENLSVAVTVVGGVTLNASKLHKIAELAQPLATQRD</sequence>
<dbReference type="EMBL" id="U20824">
    <property type="protein sequence ID" value="AAC13800.2"/>
    <property type="molecule type" value="Genomic_DNA"/>
</dbReference>
<dbReference type="PIR" id="S55607">
    <property type="entry name" value="S55607"/>
</dbReference>
<dbReference type="KEGG" id="vg:1461087"/>
<dbReference type="Proteomes" id="UP000007083">
    <property type="component" value="Segment"/>
</dbReference>
<dbReference type="InterPro" id="IPR006882">
    <property type="entry name" value="Herpes_Orf11"/>
</dbReference>
<dbReference type="Pfam" id="PF04797">
    <property type="entry name" value="Herpes_ORF11"/>
    <property type="match status" value="1"/>
</dbReference>
<accession>Q66617</accession>
<organism>
    <name type="scientific">Equine herpesvirus 2 (strain 86/87)</name>
    <name type="common">EHV-2</name>
    <dbReference type="NCBI Taxonomy" id="82831"/>
    <lineage>
        <taxon>Viruses</taxon>
        <taxon>Duplodnaviria</taxon>
        <taxon>Heunggongvirae</taxon>
        <taxon>Peploviricota</taxon>
        <taxon>Herviviricetes</taxon>
        <taxon>Herpesvirales</taxon>
        <taxon>Orthoherpesviridae</taxon>
        <taxon>Gammaherpesvirinae</taxon>
        <taxon>Percavirus</taxon>
        <taxon>Percavirus equidgamma2</taxon>
        <taxon>Equid gammaherpesvirus 2</taxon>
    </lineage>
</organism>